<protein>
    <recommendedName>
        <fullName evidence="1">Xanthine phosphoribosyltransferase</fullName>
        <shortName evidence="1">XPRTase</shortName>
        <ecNumber evidence="1">2.4.2.22</ecNumber>
    </recommendedName>
</protein>
<comment type="function">
    <text evidence="1">Converts the preformed base xanthine, a product of nucleic acid breakdown, to xanthosine 5'-monophosphate (XMP), so it can be reused for RNA or DNA synthesis.</text>
</comment>
<comment type="catalytic activity">
    <reaction evidence="1">
        <text>XMP + diphosphate = xanthine + 5-phospho-alpha-D-ribose 1-diphosphate</text>
        <dbReference type="Rhea" id="RHEA:10800"/>
        <dbReference type="ChEBI" id="CHEBI:17712"/>
        <dbReference type="ChEBI" id="CHEBI:33019"/>
        <dbReference type="ChEBI" id="CHEBI:57464"/>
        <dbReference type="ChEBI" id="CHEBI:58017"/>
        <dbReference type="EC" id="2.4.2.22"/>
    </reaction>
</comment>
<comment type="pathway">
    <text evidence="1">Purine metabolism; XMP biosynthesis via salvage pathway; XMP from xanthine: step 1/1.</text>
</comment>
<comment type="subunit">
    <text evidence="1">Homodimer.</text>
</comment>
<comment type="subcellular location">
    <subcellularLocation>
        <location evidence="1">Cytoplasm</location>
    </subcellularLocation>
</comment>
<comment type="similarity">
    <text evidence="1">Belongs to the purine/pyrimidine phosphoribosyltransferase family. Xpt subfamily.</text>
</comment>
<keyword id="KW-0963">Cytoplasm</keyword>
<keyword id="KW-0328">Glycosyltransferase</keyword>
<keyword id="KW-0660">Purine salvage</keyword>
<keyword id="KW-1185">Reference proteome</keyword>
<keyword id="KW-0808">Transferase</keyword>
<gene>
    <name evidence="1" type="primary">xpt</name>
    <name type="ordered locus">SPD_1628</name>
</gene>
<proteinExistence type="inferred from homology"/>
<reference key="1">
    <citation type="journal article" date="2007" name="J. Bacteriol.">
        <title>Genome sequence of Avery's virulent serotype 2 strain D39 of Streptococcus pneumoniae and comparison with that of unencapsulated laboratory strain R6.</title>
        <authorList>
            <person name="Lanie J.A."/>
            <person name="Ng W.-L."/>
            <person name="Kazmierczak K.M."/>
            <person name="Andrzejewski T.M."/>
            <person name="Davidsen T.M."/>
            <person name="Wayne K.J."/>
            <person name="Tettelin H."/>
            <person name="Glass J.I."/>
            <person name="Winkler M.E."/>
        </authorList>
    </citation>
    <scope>NUCLEOTIDE SEQUENCE [LARGE SCALE GENOMIC DNA]</scope>
    <source>
        <strain>D39 / NCTC 7466</strain>
    </source>
</reference>
<dbReference type="EC" id="2.4.2.22" evidence="1"/>
<dbReference type="EMBL" id="CP000410">
    <property type="protein sequence ID" value="ABJ54108.1"/>
    <property type="molecule type" value="Genomic_DNA"/>
</dbReference>
<dbReference type="RefSeq" id="WP_000770395.1">
    <property type="nucleotide sequence ID" value="NZ_JAMLJR010000003.1"/>
</dbReference>
<dbReference type="SMR" id="Q04IV9"/>
<dbReference type="PaxDb" id="373153-SPD_1628"/>
<dbReference type="KEGG" id="spd:SPD_1628"/>
<dbReference type="eggNOG" id="COG0503">
    <property type="taxonomic scope" value="Bacteria"/>
</dbReference>
<dbReference type="HOGENOM" id="CLU_099015_0_0_9"/>
<dbReference type="BioCyc" id="SPNE373153:G1G6V-1760-MONOMER"/>
<dbReference type="UniPathway" id="UPA00602">
    <property type="reaction ID" value="UER00658"/>
</dbReference>
<dbReference type="Proteomes" id="UP000001452">
    <property type="component" value="Chromosome"/>
</dbReference>
<dbReference type="GO" id="GO:0005737">
    <property type="term" value="C:cytoplasm"/>
    <property type="evidence" value="ECO:0007669"/>
    <property type="project" value="UniProtKB-SubCell"/>
</dbReference>
<dbReference type="GO" id="GO:0000310">
    <property type="term" value="F:xanthine phosphoribosyltransferase activity"/>
    <property type="evidence" value="ECO:0007669"/>
    <property type="project" value="UniProtKB-UniRule"/>
</dbReference>
<dbReference type="GO" id="GO:0006166">
    <property type="term" value="P:purine ribonucleoside salvage"/>
    <property type="evidence" value="ECO:0007669"/>
    <property type="project" value="UniProtKB-KW"/>
</dbReference>
<dbReference type="GO" id="GO:0046110">
    <property type="term" value="P:xanthine metabolic process"/>
    <property type="evidence" value="ECO:0007669"/>
    <property type="project" value="InterPro"/>
</dbReference>
<dbReference type="GO" id="GO:0032265">
    <property type="term" value="P:XMP salvage"/>
    <property type="evidence" value="ECO:0007669"/>
    <property type="project" value="UniProtKB-UniRule"/>
</dbReference>
<dbReference type="CDD" id="cd06223">
    <property type="entry name" value="PRTases_typeI"/>
    <property type="match status" value="1"/>
</dbReference>
<dbReference type="Gene3D" id="3.40.50.2020">
    <property type="match status" value="1"/>
</dbReference>
<dbReference type="HAMAP" id="MF_01184">
    <property type="entry name" value="XPRTase"/>
    <property type="match status" value="1"/>
</dbReference>
<dbReference type="InterPro" id="IPR000836">
    <property type="entry name" value="PRibTrfase_dom"/>
</dbReference>
<dbReference type="InterPro" id="IPR029057">
    <property type="entry name" value="PRTase-like"/>
</dbReference>
<dbReference type="InterPro" id="IPR050118">
    <property type="entry name" value="Pur/Pyrimidine_PRTase"/>
</dbReference>
<dbReference type="InterPro" id="IPR010079">
    <property type="entry name" value="Xanthine_PRibTrfase"/>
</dbReference>
<dbReference type="NCBIfam" id="NF006671">
    <property type="entry name" value="PRK09219.1"/>
    <property type="match status" value="1"/>
</dbReference>
<dbReference type="NCBIfam" id="TIGR01744">
    <property type="entry name" value="XPRTase"/>
    <property type="match status" value="1"/>
</dbReference>
<dbReference type="PANTHER" id="PTHR43864">
    <property type="entry name" value="HYPOXANTHINE/GUANINE PHOSPHORIBOSYLTRANSFERASE"/>
    <property type="match status" value="1"/>
</dbReference>
<dbReference type="PANTHER" id="PTHR43864:SF1">
    <property type="entry name" value="XANTHINE PHOSPHORIBOSYLTRANSFERASE"/>
    <property type="match status" value="1"/>
</dbReference>
<dbReference type="Pfam" id="PF00156">
    <property type="entry name" value="Pribosyltran"/>
    <property type="match status" value="1"/>
</dbReference>
<dbReference type="SUPFAM" id="SSF53271">
    <property type="entry name" value="PRTase-like"/>
    <property type="match status" value="1"/>
</dbReference>
<evidence type="ECO:0000255" key="1">
    <source>
        <dbReference type="HAMAP-Rule" id="MF_01184"/>
    </source>
</evidence>
<sequence>MKLLEERILKDGHILDDNILKVDSFLTHQVDFSLMREIGKVFAEKFAATGITKVVTIEASGIAPAVFTAEALNVPMIFAKKAKNITMNEGILTAQVYSFTKQVTSTVSIAGKFLSPEDKVLIIDDFLANGQAAKGLIQIIEQAGATVQAIGIVIEKSFQDGRDLLEKAGYPVLSLARLDRFENGQVVFKEADL</sequence>
<organism>
    <name type="scientific">Streptococcus pneumoniae serotype 2 (strain D39 / NCTC 7466)</name>
    <dbReference type="NCBI Taxonomy" id="373153"/>
    <lineage>
        <taxon>Bacteria</taxon>
        <taxon>Bacillati</taxon>
        <taxon>Bacillota</taxon>
        <taxon>Bacilli</taxon>
        <taxon>Lactobacillales</taxon>
        <taxon>Streptococcaceae</taxon>
        <taxon>Streptococcus</taxon>
    </lineage>
</organism>
<name>XPT_STRP2</name>
<accession>Q04IV9</accession>
<feature type="chain" id="PRO_0000339765" description="Xanthine phosphoribosyltransferase">
    <location>
        <begin position="1"/>
        <end position="193"/>
    </location>
</feature>
<feature type="binding site" evidence="1">
    <location>
        <position position="20"/>
    </location>
    <ligand>
        <name>xanthine</name>
        <dbReference type="ChEBI" id="CHEBI:17712"/>
    </ligand>
</feature>
<feature type="binding site" evidence="1">
    <location>
        <position position="27"/>
    </location>
    <ligand>
        <name>xanthine</name>
        <dbReference type="ChEBI" id="CHEBI:17712"/>
    </ligand>
</feature>
<feature type="binding site" evidence="1">
    <location>
        <begin position="128"/>
        <end position="132"/>
    </location>
    <ligand>
        <name>5-phospho-alpha-D-ribose 1-diphosphate</name>
        <dbReference type="ChEBI" id="CHEBI:58017"/>
    </ligand>
</feature>
<feature type="binding site" evidence="1">
    <location>
        <position position="156"/>
    </location>
    <ligand>
        <name>xanthine</name>
        <dbReference type="ChEBI" id="CHEBI:17712"/>
    </ligand>
</feature>